<reference key="1">
    <citation type="journal article" date="2006" name="Gene">
        <title>Adaptive selection of mitochondrial complex I subunits during primate radiation.</title>
        <authorList>
            <person name="Mishmar D."/>
            <person name="Ruiz-Pesini E."/>
            <person name="Mondragon-Palomino M."/>
            <person name="Procaccio V."/>
            <person name="Gaut B."/>
            <person name="Wallace D.C."/>
        </authorList>
    </citation>
    <scope>NUCLEOTIDE SEQUENCE [MRNA]</scope>
</reference>
<dbReference type="EMBL" id="DQ885718">
    <property type="protein sequence ID" value="ABH12227.1"/>
    <property type="molecule type" value="mRNA"/>
</dbReference>
<dbReference type="RefSeq" id="NP_001266578.1">
    <property type="nucleotide sequence ID" value="NM_001279649.1"/>
</dbReference>
<dbReference type="SMR" id="Q0MQB6"/>
<dbReference type="FunCoup" id="Q0MQB6">
    <property type="interactions" value="1778"/>
</dbReference>
<dbReference type="STRING" id="9593.ENSGGOP00000001417"/>
<dbReference type="Ensembl" id="ENSGGOT00000026612.2">
    <property type="protein sequence ID" value="ENSGGOP00000021263.2"/>
    <property type="gene ID" value="ENSGGOG00000001432.3"/>
</dbReference>
<dbReference type="GeneID" id="101146483"/>
<dbReference type="KEGG" id="ggo:101146483"/>
<dbReference type="CTD" id="4705"/>
<dbReference type="GeneTree" id="ENSGT00390000016151"/>
<dbReference type="InParanoid" id="Q0MQB6"/>
<dbReference type="Proteomes" id="UP000001519">
    <property type="component" value="Chromosome 2B"/>
</dbReference>
<dbReference type="Bgee" id="ENSGGOG00000001432">
    <property type="expression patterns" value="Expressed in heart and 5 other cell types or tissues"/>
</dbReference>
<dbReference type="GO" id="GO:0005737">
    <property type="term" value="C:cytoplasm"/>
    <property type="evidence" value="ECO:0000318"/>
    <property type="project" value="GO_Central"/>
</dbReference>
<dbReference type="GO" id="GO:0005759">
    <property type="term" value="C:mitochondrial matrix"/>
    <property type="evidence" value="ECO:0007669"/>
    <property type="project" value="UniProtKB-SubCell"/>
</dbReference>
<dbReference type="GO" id="GO:0045271">
    <property type="term" value="C:respiratory chain complex I"/>
    <property type="evidence" value="ECO:0000250"/>
    <property type="project" value="UniProtKB"/>
</dbReference>
<dbReference type="GO" id="GO:0006120">
    <property type="term" value="P:mitochondrial electron transport, NADH to ubiquinone"/>
    <property type="evidence" value="ECO:0000318"/>
    <property type="project" value="GO_Central"/>
</dbReference>
<dbReference type="CDD" id="cd02030">
    <property type="entry name" value="NDUO42"/>
    <property type="match status" value="1"/>
</dbReference>
<dbReference type="FunFam" id="3.40.50.300:FF:000837">
    <property type="entry name" value="NADH dehydrogenase [ubiquinone] 1 alpha subcomplex subunit 10, mitochondrial"/>
    <property type="match status" value="1"/>
</dbReference>
<dbReference type="Gene3D" id="3.40.50.300">
    <property type="entry name" value="P-loop containing nucleotide triphosphate hydrolases"/>
    <property type="match status" value="1"/>
</dbReference>
<dbReference type="InterPro" id="IPR050566">
    <property type="entry name" value="Deoxyribonucleoside_kinase"/>
</dbReference>
<dbReference type="InterPro" id="IPR031314">
    <property type="entry name" value="DNK_dom"/>
</dbReference>
<dbReference type="InterPro" id="IPR015828">
    <property type="entry name" value="NDUFA10"/>
</dbReference>
<dbReference type="InterPro" id="IPR027417">
    <property type="entry name" value="P-loop_NTPase"/>
</dbReference>
<dbReference type="PANTHER" id="PTHR10513">
    <property type="entry name" value="DEOXYNUCLEOSIDE KINASE"/>
    <property type="match status" value="1"/>
</dbReference>
<dbReference type="PANTHER" id="PTHR10513:SF15">
    <property type="entry name" value="NADH DEHYDROGENASE [UBIQUINONE] 1 ALPHA SUBCOMPLEX SUBUNIT 10, MITOCHONDRIAL"/>
    <property type="match status" value="1"/>
</dbReference>
<dbReference type="Pfam" id="PF01712">
    <property type="entry name" value="dNK"/>
    <property type="match status" value="1"/>
</dbReference>
<dbReference type="PIRSF" id="PIRSF000543">
    <property type="entry name" value="NADH_UQ_42KD"/>
    <property type="match status" value="1"/>
</dbReference>
<dbReference type="SUPFAM" id="SSF52540">
    <property type="entry name" value="P-loop containing nucleoside triphosphate hydrolases"/>
    <property type="match status" value="1"/>
</dbReference>
<protein>
    <recommendedName>
        <fullName>NADH dehydrogenase [ubiquinone] 1 alpha subcomplex subunit 10, mitochondrial</fullName>
    </recommendedName>
    <alternativeName>
        <fullName>Complex I-42kD</fullName>
        <shortName>CI-42kD</shortName>
    </alternativeName>
    <alternativeName>
        <fullName>NADH-ubiquinone oxidoreductase 42 kDa subunit</fullName>
    </alternativeName>
</protein>
<gene>
    <name type="primary">NDUFA10</name>
</gene>
<accession>Q0MQB6</accession>
<sequence length="355" mass="40591">MALRLLKLGATSASARVVAAGAQRVRGIHSSGQCKLPYGMWHFLLGDKASKRLTERSRVITVDGNICTGKGKLAKEIAEKLGFKHFPEAGIHYPDSTTGDGKPLAADYNGNCSLEKFYDDPRSNDGNSYRLQSWLYSSRLLQYSDALEHLLTTGQGVVLERSIFSDFVFLDAMYNQGFIRKQCVDHYNEVKSVTICDYLPPHLVIYIDVPVPEVQRRIQKKGDPHEMKITSAYLQDIENAYKKTFLPEMSEKCEVLQYSAREAQDSKKVVEDIEYLKFDKGPWLKQDNRTLYHLRLLVQDKFEVLNYTSIPIFLPEVTIGAHQTDRVLHQFRELPGRKYSPGYNTEVGDKWIWLK</sequence>
<evidence type="ECO:0000250" key="1"/>
<evidence type="ECO:0000250" key="2">
    <source>
        <dbReference type="UniProtKB" id="O95299"/>
    </source>
</evidence>
<evidence type="ECO:0000250" key="3">
    <source>
        <dbReference type="UniProtKB" id="P34942"/>
    </source>
</evidence>
<evidence type="ECO:0000250" key="4">
    <source>
        <dbReference type="UniProtKB" id="Q99LC3"/>
    </source>
</evidence>
<evidence type="ECO:0000305" key="5"/>
<feature type="transit peptide" description="Mitochondrion" evidence="3">
    <location>
        <begin position="1"/>
        <end position="35"/>
    </location>
</feature>
<feature type="chain" id="PRO_0000251812" description="NADH dehydrogenase [ubiquinone] 1 alpha subcomplex subunit 10, mitochondrial">
    <location>
        <begin position="36"/>
        <end position="355"/>
    </location>
</feature>
<feature type="modified residue" description="Phosphoserine; by PINK1" evidence="4">
    <location>
        <position position="250"/>
    </location>
</feature>
<feature type="modified residue" description="N6-succinyllysine" evidence="4">
    <location>
        <position position="285"/>
    </location>
</feature>
<name>NDUAA_GORGO</name>
<proteinExistence type="evidence at transcript level"/>
<comment type="function">
    <text evidence="2">Accessory subunit of the mitochondrial membrane respiratory chain NADH dehydrogenase (Complex I), that is believed not to be involved in catalysis. Complex I functions in the transfer of electrons from NADH to the respiratory chain. The immediate electron acceptor for the enzyme is believed to be ubiquinone.</text>
</comment>
<comment type="cofactor">
    <cofactor evidence="1">
        <name>FAD</name>
        <dbReference type="ChEBI" id="CHEBI:57692"/>
    </cofactor>
    <text evidence="1">Binds 1 FAD per subunit.</text>
</comment>
<comment type="subunit">
    <text evidence="2">Complex I is composed of 45 different subunits. This a component of the hydrophobic protein fraction.</text>
</comment>
<comment type="subcellular location">
    <subcellularLocation>
        <location evidence="2">Mitochondrion matrix</location>
    </subcellularLocation>
</comment>
<comment type="PTM">
    <text evidence="4">Phosphorylation at Ser-250 by PINK1 is required for the binding and/or reduction of the complex I substrate ubiquinone.</text>
</comment>
<comment type="similarity">
    <text evidence="5">Belongs to the complex I NDUFA10 subunit family.</text>
</comment>
<organism>
    <name type="scientific">Gorilla gorilla gorilla</name>
    <name type="common">Western lowland gorilla</name>
    <dbReference type="NCBI Taxonomy" id="9595"/>
    <lineage>
        <taxon>Eukaryota</taxon>
        <taxon>Metazoa</taxon>
        <taxon>Chordata</taxon>
        <taxon>Craniata</taxon>
        <taxon>Vertebrata</taxon>
        <taxon>Euteleostomi</taxon>
        <taxon>Mammalia</taxon>
        <taxon>Eutheria</taxon>
        <taxon>Euarchontoglires</taxon>
        <taxon>Primates</taxon>
        <taxon>Haplorrhini</taxon>
        <taxon>Catarrhini</taxon>
        <taxon>Hominidae</taxon>
        <taxon>Gorilla</taxon>
    </lineage>
</organism>
<keyword id="KW-0249">Electron transport</keyword>
<keyword id="KW-0274">FAD</keyword>
<keyword id="KW-0285">Flavoprotein</keyword>
<keyword id="KW-0496">Mitochondrion</keyword>
<keyword id="KW-0597">Phosphoprotein</keyword>
<keyword id="KW-1185">Reference proteome</keyword>
<keyword id="KW-0679">Respiratory chain</keyword>
<keyword id="KW-0809">Transit peptide</keyword>
<keyword id="KW-0813">Transport</keyword>